<organism>
    <name type="scientific">Helicobacter acinonychis (strain Sheeba)</name>
    <dbReference type="NCBI Taxonomy" id="382638"/>
    <lineage>
        <taxon>Bacteria</taxon>
        <taxon>Pseudomonadati</taxon>
        <taxon>Campylobacterota</taxon>
        <taxon>Epsilonproteobacteria</taxon>
        <taxon>Campylobacterales</taxon>
        <taxon>Helicobacteraceae</taxon>
        <taxon>Helicobacter</taxon>
    </lineage>
</organism>
<gene>
    <name evidence="1" type="primary">ung</name>
    <name type="ordered locus">Hac_0276</name>
</gene>
<protein>
    <recommendedName>
        <fullName evidence="1">Uracil-DNA glycosylase</fullName>
        <shortName evidence="1">UDG</shortName>
        <ecNumber evidence="1">3.2.2.27</ecNumber>
    </recommendedName>
</protein>
<sequence length="233" mass="26297">MKLFDYAPLSLAWREFLQSEFKKPYFLEIEKRYLEALKSPKTIFPKSSHLFYALNLTPPCAVKIILLGQDPYHSIYLENSQELPVAMGLSFGVNPNAPIPPSLRNIFKELHANLGVPIPCCGDLSAWAKRGMLLLNAILSVEKKQAASHQYIGWENFSDRILARLFETTSPLIVVLLGKVAQKKIALIPKNKHIIITAPHPSPLARGFLGSGVFTSIQKAYREIYRKDFDFSL</sequence>
<comment type="function">
    <text evidence="1">Excises uracil residues from the DNA which can arise as a result of misincorporation of dUMP residues by DNA polymerase or due to deamination of cytosine.</text>
</comment>
<comment type="catalytic activity">
    <reaction evidence="1">
        <text>Hydrolyzes single-stranded DNA or mismatched double-stranded DNA and polynucleotides, releasing free uracil.</text>
        <dbReference type="EC" id="3.2.2.27"/>
    </reaction>
</comment>
<comment type="subcellular location">
    <subcellularLocation>
        <location evidence="1">Cytoplasm</location>
    </subcellularLocation>
</comment>
<comment type="similarity">
    <text evidence="1">Belongs to the uracil-DNA glycosylase (UDG) superfamily. UNG family.</text>
</comment>
<reference key="1">
    <citation type="journal article" date="2006" name="PLoS Genet.">
        <title>Who ate whom? Adaptive Helicobacter genomic changes that accompanied a host jump from early humans to large felines.</title>
        <authorList>
            <person name="Eppinger M."/>
            <person name="Baar C."/>
            <person name="Linz B."/>
            <person name="Raddatz G."/>
            <person name="Lanz C."/>
            <person name="Keller H."/>
            <person name="Morelli G."/>
            <person name="Gressmann H."/>
            <person name="Achtman M."/>
            <person name="Schuster S.C."/>
        </authorList>
    </citation>
    <scope>NUCLEOTIDE SEQUENCE [LARGE SCALE GENOMIC DNA]</scope>
    <source>
        <strain>Sheeba</strain>
    </source>
</reference>
<dbReference type="EC" id="3.2.2.27" evidence="1"/>
<dbReference type="EMBL" id="AM260522">
    <property type="protein sequence ID" value="CAJ99121.1"/>
    <property type="molecule type" value="Genomic_DNA"/>
</dbReference>
<dbReference type="RefSeq" id="WP_011577236.1">
    <property type="nucleotide sequence ID" value="NC_008229.1"/>
</dbReference>
<dbReference type="SMR" id="Q17Z05"/>
<dbReference type="STRING" id="382638.Hac_0276"/>
<dbReference type="GeneID" id="31757793"/>
<dbReference type="KEGG" id="hac:Hac_0276"/>
<dbReference type="eggNOG" id="COG0692">
    <property type="taxonomic scope" value="Bacteria"/>
</dbReference>
<dbReference type="HOGENOM" id="CLU_032162_3_2_7"/>
<dbReference type="OrthoDB" id="9804372at2"/>
<dbReference type="BioCyc" id="HACI382638:HAC_RS01235-MONOMER"/>
<dbReference type="Proteomes" id="UP000000775">
    <property type="component" value="Chromosome"/>
</dbReference>
<dbReference type="GO" id="GO:0005737">
    <property type="term" value="C:cytoplasm"/>
    <property type="evidence" value="ECO:0007669"/>
    <property type="project" value="UniProtKB-SubCell"/>
</dbReference>
<dbReference type="GO" id="GO:0004844">
    <property type="term" value="F:uracil DNA N-glycosylase activity"/>
    <property type="evidence" value="ECO:0007669"/>
    <property type="project" value="UniProtKB-UniRule"/>
</dbReference>
<dbReference type="GO" id="GO:0097510">
    <property type="term" value="P:base-excision repair, AP site formation via deaminated base removal"/>
    <property type="evidence" value="ECO:0007669"/>
    <property type="project" value="TreeGrafter"/>
</dbReference>
<dbReference type="CDD" id="cd10027">
    <property type="entry name" value="UDG-F1-like"/>
    <property type="match status" value="1"/>
</dbReference>
<dbReference type="Gene3D" id="3.40.470.10">
    <property type="entry name" value="Uracil-DNA glycosylase-like domain"/>
    <property type="match status" value="1"/>
</dbReference>
<dbReference type="HAMAP" id="MF_00148">
    <property type="entry name" value="UDG"/>
    <property type="match status" value="1"/>
</dbReference>
<dbReference type="InterPro" id="IPR002043">
    <property type="entry name" value="UDG_fam1"/>
</dbReference>
<dbReference type="InterPro" id="IPR018085">
    <property type="entry name" value="Ura-DNA_Glyclase_AS"/>
</dbReference>
<dbReference type="InterPro" id="IPR005122">
    <property type="entry name" value="Uracil-DNA_glycosylase-like"/>
</dbReference>
<dbReference type="InterPro" id="IPR036895">
    <property type="entry name" value="Uracil-DNA_glycosylase-like_sf"/>
</dbReference>
<dbReference type="NCBIfam" id="NF003588">
    <property type="entry name" value="PRK05254.1-1"/>
    <property type="match status" value="1"/>
</dbReference>
<dbReference type="NCBIfam" id="NF003589">
    <property type="entry name" value="PRK05254.1-2"/>
    <property type="match status" value="1"/>
</dbReference>
<dbReference type="NCBIfam" id="NF003592">
    <property type="entry name" value="PRK05254.1-5"/>
    <property type="match status" value="1"/>
</dbReference>
<dbReference type="NCBIfam" id="TIGR00628">
    <property type="entry name" value="ung"/>
    <property type="match status" value="1"/>
</dbReference>
<dbReference type="PANTHER" id="PTHR11264">
    <property type="entry name" value="URACIL-DNA GLYCOSYLASE"/>
    <property type="match status" value="1"/>
</dbReference>
<dbReference type="PANTHER" id="PTHR11264:SF0">
    <property type="entry name" value="URACIL-DNA GLYCOSYLASE"/>
    <property type="match status" value="1"/>
</dbReference>
<dbReference type="Pfam" id="PF03167">
    <property type="entry name" value="UDG"/>
    <property type="match status" value="1"/>
</dbReference>
<dbReference type="SMART" id="SM00986">
    <property type="entry name" value="UDG"/>
    <property type="match status" value="1"/>
</dbReference>
<dbReference type="SMART" id="SM00987">
    <property type="entry name" value="UreE_C"/>
    <property type="match status" value="1"/>
</dbReference>
<dbReference type="SUPFAM" id="SSF52141">
    <property type="entry name" value="Uracil-DNA glycosylase-like"/>
    <property type="match status" value="1"/>
</dbReference>
<dbReference type="PROSITE" id="PS00130">
    <property type="entry name" value="U_DNA_GLYCOSYLASE"/>
    <property type="match status" value="1"/>
</dbReference>
<proteinExistence type="inferred from homology"/>
<feature type="chain" id="PRO_1000009899" description="Uracil-DNA glycosylase">
    <location>
        <begin position="1"/>
        <end position="233"/>
    </location>
</feature>
<feature type="active site" description="Proton acceptor" evidence="1">
    <location>
        <position position="70"/>
    </location>
</feature>
<name>UNG_HELAH</name>
<accession>Q17Z05</accession>
<evidence type="ECO:0000255" key="1">
    <source>
        <dbReference type="HAMAP-Rule" id="MF_00148"/>
    </source>
</evidence>
<keyword id="KW-0963">Cytoplasm</keyword>
<keyword id="KW-0227">DNA damage</keyword>
<keyword id="KW-0234">DNA repair</keyword>
<keyword id="KW-0378">Hydrolase</keyword>